<accession>P59517</accession>
<organism>
    <name type="scientific">Buchnera aphidicola subsp. Baizongia pistaciae (strain Bp)</name>
    <dbReference type="NCBI Taxonomy" id="224915"/>
    <lineage>
        <taxon>Bacteria</taxon>
        <taxon>Pseudomonadati</taxon>
        <taxon>Pseudomonadota</taxon>
        <taxon>Gammaproteobacteria</taxon>
        <taxon>Enterobacterales</taxon>
        <taxon>Erwiniaceae</taxon>
        <taxon>Buchnera</taxon>
    </lineage>
</organism>
<dbReference type="EC" id="6.1.1.22" evidence="1"/>
<dbReference type="EMBL" id="AE016826">
    <property type="protein sequence ID" value="AAO27050.1"/>
    <property type="molecule type" value="Genomic_DNA"/>
</dbReference>
<dbReference type="RefSeq" id="WP_011091451.1">
    <property type="nucleotide sequence ID" value="NC_004545.1"/>
</dbReference>
<dbReference type="SMR" id="P59517"/>
<dbReference type="STRING" id="224915.bbp_329"/>
<dbReference type="KEGG" id="bab:bbp_329"/>
<dbReference type="eggNOG" id="COG0017">
    <property type="taxonomic scope" value="Bacteria"/>
</dbReference>
<dbReference type="HOGENOM" id="CLU_004553_2_0_6"/>
<dbReference type="OrthoDB" id="9762036at2"/>
<dbReference type="Proteomes" id="UP000000601">
    <property type="component" value="Chromosome"/>
</dbReference>
<dbReference type="GO" id="GO:0005737">
    <property type="term" value="C:cytoplasm"/>
    <property type="evidence" value="ECO:0007669"/>
    <property type="project" value="UniProtKB-SubCell"/>
</dbReference>
<dbReference type="GO" id="GO:0004816">
    <property type="term" value="F:asparagine-tRNA ligase activity"/>
    <property type="evidence" value="ECO:0007669"/>
    <property type="project" value="UniProtKB-UniRule"/>
</dbReference>
<dbReference type="GO" id="GO:0005524">
    <property type="term" value="F:ATP binding"/>
    <property type="evidence" value="ECO:0007669"/>
    <property type="project" value="UniProtKB-UniRule"/>
</dbReference>
<dbReference type="GO" id="GO:0003676">
    <property type="term" value="F:nucleic acid binding"/>
    <property type="evidence" value="ECO:0007669"/>
    <property type="project" value="InterPro"/>
</dbReference>
<dbReference type="GO" id="GO:0006421">
    <property type="term" value="P:asparaginyl-tRNA aminoacylation"/>
    <property type="evidence" value="ECO:0007669"/>
    <property type="project" value="UniProtKB-UniRule"/>
</dbReference>
<dbReference type="CDD" id="cd00776">
    <property type="entry name" value="AsxRS_core"/>
    <property type="match status" value="1"/>
</dbReference>
<dbReference type="CDD" id="cd04318">
    <property type="entry name" value="EcAsnRS_like_N"/>
    <property type="match status" value="1"/>
</dbReference>
<dbReference type="FunFam" id="3.30.930.10:FF:000016">
    <property type="entry name" value="Asparagine--tRNA ligase"/>
    <property type="match status" value="1"/>
</dbReference>
<dbReference type="Gene3D" id="3.30.930.10">
    <property type="entry name" value="Bira Bifunctional Protein, Domain 2"/>
    <property type="match status" value="1"/>
</dbReference>
<dbReference type="Gene3D" id="2.40.50.140">
    <property type="entry name" value="Nucleic acid-binding proteins"/>
    <property type="match status" value="1"/>
</dbReference>
<dbReference type="HAMAP" id="MF_00534">
    <property type="entry name" value="Asn_tRNA_synth"/>
    <property type="match status" value="1"/>
</dbReference>
<dbReference type="InterPro" id="IPR004364">
    <property type="entry name" value="Aa-tRNA-synt_II"/>
</dbReference>
<dbReference type="InterPro" id="IPR006195">
    <property type="entry name" value="aa-tRNA-synth_II"/>
</dbReference>
<dbReference type="InterPro" id="IPR045864">
    <property type="entry name" value="aa-tRNA-synth_II/BPL/LPL"/>
</dbReference>
<dbReference type="InterPro" id="IPR004522">
    <property type="entry name" value="Asn-tRNA-ligase"/>
</dbReference>
<dbReference type="InterPro" id="IPR002312">
    <property type="entry name" value="Asp/Asn-tRNA-synth_IIb"/>
</dbReference>
<dbReference type="InterPro" id="IPR012340">
    <property type="entry name" value="NA-bd_OB-fold"/>
</dbReference>
<dbReference type="InterPro" id="IPR004365">
    <property type="entry name" value="NA-bd_OB_tRNA"/>
</dbReference>
<dbReference type="NCBIfam" id="TIGR00457">
    <property type="entry name" value="asnS"/>
    <property type="match status" value="1"/>
</dbReference>
<dbReference type="NCBIfam" id="NF003037">
    <property type="entry name" value="PRK03932.1"/>
    <property type="match status" value="1"/>
</dbReference>
<dbReference type="PANTHER" id="PTHR22594:SF34">
    <property type="entry name" value="ASPARAGINE--TRNA LIGASE, MITOCHONDRIAL-RELATED"/>
    <property type="match status" value="1"/>
</dbReference>
<dbReference type="PANTHER" id="PTHR22594">
    <property type="entry name" value="ASPARTYL/LYSYL-TRNA SYNTHETASE"/>
    <property type="match status" value="1"/>
</dbReference>
<dbReference type="Pfam" id="PF00152">
    <property type="entry name" value="tRNA-synt_2"/>
    <property type="match status" value="1"/>
</dbReference>
<dbReference type="Pfam" id="PF01336">
    <property type="entry name" value="tRNA_anti-codon"/>
    <property type="match status" value="1"/>
</dbReference>
<dbReference type="PRINTS" id="PR01042">
    <property type="entry name" value="TRNASYNTHASP"/>
</dbReference>
<dbReference type="SUPFAM" id="SSF55681">
    <property type="entry name" value="Class II aaRS and biotin synthetases"/>
    <property type="match status" value="1"/>
</dbReference>
<dbReference type="SUPFAM" id="SSF50249">
    <property type="entry name" value="Nucleic acid-binding proteins"/>
    <property type="match status" value="1"/>
</dbReference>
<dbReference type="PROSITE" id="PS50862">
    <property type="entry name" value="AA_TRNA_LIGASE_II"/>
    <property type="match status" value="1"/>
</dbReference>
<proteinExistence type="inferred from homology"/>
<reference key="1">
    <citation type="journal article" date="2003" name="Proc. Natl. Acad. Sci. U.S.A.">
        <title>Reductive genome evolution in Buchnera aphidicola.</title>
        <authorList>
            <person name="van Ham R.C.H.J."/>
            <person name="Kamerbeek J."/>
            <person name="Palacios C."/>
            <person name="Rausell C."/>
            <person name="Abascal F."/>
            <person name="Bastolla U."/>
            <person name="Fernandez J.M."/>
            <person name="Jimenez L."/>
            <person name="Postigo M."/>
            <person name="Silva F.J."/>
            <person name="Tamames J."/>
            <person name="Viguera E."/>
            <person name="Latorre A."/>
            <person name="Valencia A."/>
            <person name="Moran F."/>
            <person name="Moya A."/>
        </authorList>
    </citation>
    <scope>NUCLEOTIDE SEQUENCE [LARGE SCALE GENOMIC DNA]</scope>
    <source>
        <strain>Bp</strain>
    </source>
</reference>
<keyword id="KW-0030">Aminoacyl-tRNA synthetase</keyword>
<keyword id="KW-0067">ATP-binding</keyword>
<keyword id="KW-0963">Cytoplasm</keyword>
<keyword id="KW-0436">Ligase</keyword>
<keyword id="KW-0547">Nucleotide-binding</keyword>
<keyword id="KW-0648">Protein biosynthesis</keyword>
<keyword id="KW-1185">Reference proteome</keyword>
<name>SYN_BUCBP</name>
<feature type="chain" id="PRO_0000176399" description="Asparagine--tRNA ligase">
    <location>
        <begin position="1"/>
        <end position="466"/>
    </location>
</feature>
<gene>
    <name evidence="1" type="primary">asnS</name>
    <name type="ordered locus">bbp_329</name>
</gene>
<sequence>MKTVSIFDIYLNKIKLNSKINIQGWVRNRRRSKLGLLFIDLYDGSCLYTMQVVVKDILSNYDSEISKLSVGCSINVFGVLISSIGTKQKYEIQAKVVKVIGIINNPGSYPISSKYHTMKHLRNVPHLRSRTNFFGAVSRVRNYLFNALHEFLFKNGYYWIPSPIITGLNSEGAGDMFKVSILDLNNIPKNKNGKINFKKDFFGKEAFLTVSGQLTLETYACSLSKVYSFGPIFRAENSNTRRHLSEFWMLEVETAFSNLCDIIKFSENMLKYAIGIILDKCVIDINFFRENVDEKIFCRLKDFSSKQFFQIEYKEAINILIKSNRFDHKVMFIGMELSSDHERFLVEEYFKFPLVITNYPKSLKAFYMRVNDDNKTVSAMDVLVPGVGEIIGGSEREERLNVLDRRFFELNLNKEDYWWYRDLRKYGTIPHSGFGLGFERLLSYILGIKNIRDVCPFPRTAYKADF</sequence>
<protein>
    <recommendedName>
        <fullName evidence="1">Asparagine--tRNA ligase</fullName>
        <ecNumber evidence="1">6.1.1.22</ecNumber>
    </recommendedName>
    <alternativeName>
        <fullName evidence="1">Asparaginyl-tRNA synthetase</fullName>
        <shortName evidence="1">AsnRS</shortName>
    </alternativeName>
</protein>
<evidence type="ECO:0000255" key="1">
    <source>
        <dbReference type="HAMAP-Rule" id="MF_00534"/>
    </source>
</evidence>
<comment type="catalytic activity">
    <reaction evidence="1">
        <text>tRNA(Asn) + L-asparagine + ATP = L-asparaginyl-tRNA(Asn) + AMP + diphosphate + H(+)</text>
        <dbReference type="Rhea" id="RHEA:11180"/>
        <dbReference type="Rhea" id="RHEA-COMP:9659"/>
        <dbReference type="Rhea" id="RHEA-COMP:9674"/>
        <dbReference type="ChEBI" id="CHEBI:15378"/>
        <dbReference type="ChEBI" id="CHEBI:30616"/>
        <dbReference type="ChEBI" id="CHEBI:33019"/>
        <dbReference type="ChEBI" id="CHEBI:58048"/>
        <dbReference type="ChEBI" id="CHEBI:78442"/>
        <dbReference type="ChEBI" id="CHEBI:78515"/>
        <dbReference type="ChEBI" id="CHEBI:456215"/>
        <dbReference type="EC" id="6.1.1.22"/>
    </reaction>
</comment>
<comment type="subunit">
    <text evidence="1">Homodimer.</text>
</comment>
<comment type="subcellular location">
    <subcellularLocation>
        <location evidence="1">Cytoplasm</location>
    </subcellularLocation>
</comment>
<comment type="similarity">
    <text evidence="1">Belongs to the class-II aminoacyl-tRNA synthetase family.</text>
</comment>